<name>Y721_PROMH</name>
<comment type="similarity">
    <text evidence="1">Belongs to the UPF0434 family.</text>
</comment>
<feature type="chain" id="PRO_1000138320" description="UPF0434 protein PMI0721">
    <location>
        <begin position="1"/>
        <end position="59"/>
    </location>
</feature>
<gene>
    <name type="ordered locus">PMI0721</name>
</gene>
<evidence type="ECO:0000255" key="1">
    <source>
        <dbReference type="HAMAP-Rule" id="MF_01187"/>
    </source>
</evidence>
<dbReference type="EMBL" id="AM942759">
    <property type="protein sequence ID" value="CAR41687.1"/>
    <property type="molecule type" value="Genomic_DNA"/>
</dbReference>
<dbReference type="RefSeq" id="WP_004244593.1">
    <property type="nucleotide sequence ID" value="NC_010554.1"/>
</dbReference>
<dbReference type="SMR" id="B4ET33"/>
<dbReference type="EnsemblBacteria" id="CAR41687">
    <property type="protein sequence ID" value="CAR41687"/>
    <property type="gene ID" value="PMI0721"/>
</dbReference>
<dbReference type="KEGG" id="pmr:PMI0721"/>
<dbReference type="eggNOG" id="COG2835">
    <property type="taxonomic scope" value="Bacteria"/>
</dbReference>
<dbReference type="HOGENOM" id="CLU_155659_3_1_6"/>
<dbReference type="Proteomes" id="UP000008319">
    <property type="component" value="Chromosome"/>
</dbReference>
<dbReference type="GO" id="GO:0005829">
    <property type="term" value="C:cytosol"/>
    <property type="evidence" value="ECO:0007669"/>
    <property type="project" value="TreeGrafter"/>
</dbReference>
<dbReference type="FunFam" id="2.20.25.10:FF:000002">
    <property type="entry name" value="UPF0434 protein YcaR"/>
    <property type="match status" value="1"/>
</dbReference>
<dbReference type="Gene3D" id="2.20.25.10">
    <property type="match status" value="1"/>
</dbReference>
<dbReference type="HAMAP" id="MF_01187">
    <property type="entry name" value="UPF0434"/>
    <property type="match status" value="1"/>
</dbReference>
<dbReference type="InterPro" id="IPR005651">
    <property type="entry name" value="Trm112-like"/>
</dbReference>
<dbReference type="PANTHER" id="PTHR33505:SF4">
    <property type="entry name" value="PROTEIN PREY, MITOCHONDRIAL"/>
    <property type="match status" value="1"/>
</dbReference>
<dbReference type="PANTHER" id="PTHR33505">
    <property type="entry name" value="ZGC:162634"/>
    <property type="match status" value="1"/>
</dbReference>
<dbReference type="Pfam" id="PF03966">
    <property type="entry name" value="Trm112p"/>
    <property type="match status" value="1"/>
</dbReference>
<dbReference type="SUPFAM" id="SSF158997">
    <property type="entry name" value="Trm112p-like"/>
    <property type="match status" value="1"/>
</dbReference>
<protein>
    <recommendedName>
        <fullName evidence="1">UPF0434 protein PMI0721</fullName>
    </recommendedName>
</protein>
<organism>
    <name type="scientific">Proteus mirabilis (strain HI4320)</name>
    <dbReference type="NCBI Taxonomy" id="529507"/>
    <lineage>
        <taxon>Bacteria</taxon>
        <taxon>Pseudomonadati</taxon>
        <taxon>Pseudomonadota</taxon>
        <taxon>Gammaproteobacteria</taxon>
        <taxon>Enterobacterales</taxon>
        <taxon>Morganellaceae</taxon>
        <taxon>Proteus</taxon>
    </lineage>
</organism>
<proteinExistence type="inferred from homology"/>
<keyword id="KW-1185">Reference proteome</keyword>
<accession>B4ET33</accession>
<reference key="1">
    <citation type="journal article" date="2008" name="J. Bacteriol.">
        <title>Complete genome sequence of uropathogenic Proteus mirabilis, a master of both adherence and motility.</title>
        <authorList>
            <person name="Pearson M.M."/>
            <person name="Sebaihia M."/>
            <person name="Churcher C."/>
            <person name="Quail M.A."/>
            <person name="Seshasayee A.S."/>
            <person name="Luscombe N.M."/>
            <person name="Abdellah Z."/>
            <person name="Arrosmith C."/>
            <person name="Atkin B."/>
            <person name="Chillingworth T."/>
            <person name="Hauser H."/>
            <person name="Jagels K."/>
            <person name="Moule S."/>
            <person name="Mungall K."/>
            <person name="Norbertczak H."/>
            <person name="Rabbinowitsch E."/>
            <person name="Walker D."/>
            <person name="Whithead S."/>
            <person name="Thomson N.R."/>
            <person name="Rather P.N."/>
            <person name="Parkhill J."/>
            <person name="Mobley H.L.T."/>
        </authorList>
    </citation>
    <scope>NUCLEOTIDE SEQUENCE [LARGE SCALE GENOMIC DNA]</scope>
    <source>
        <strain>HI4320</strain>
    </source>
</reference>
<sequence length="59" mass="6857">MDHRLLEIIACPVCHGKLIFDKENSELICKIDHLAYPVRDNIPVLLENEARELSLEEEK</sequence>